<feature type="chain" id="PRO_0000350908" description="Putative uncharacterized protein DDB_G0284619">
    <location>
        <begin position="1"/>
        <end position="253"/>
    </location>
</feature>
<feature type="region of interest" description="Disordered" evidence="1">
    <location>
        <begin position="1"/>
        <end position="192"/>
    </location>
</feature>
<feature type="region of interest" description="Disordered" evidence="1">
    <location>
        <begin position="212"/>
        <end position="253"/>
    </location>
</feature>
<feature type="compositionally biased region" description="Low complexity" evidence="1">
    <location>
        <begin position="1"/>
        <end position="14"/>
    </location>
</feature>
<feature type="compositionally biased region" description="Basic and acidic residues" evidence="1">
    <location>
        <begin position="17"/>
        <end position="30"/>
    </location>
</feature>
<feature type="compositionally biased region" description="Basic and acidic residues" evidence="1">
    <location>
        <begin position="45"/>
        <end position="60"/>
    </location>
</feature>
<feature type="compositionally biased region" description="Low complexity" evidence="1">
    <location>
        <begin position="63"/>
        <end position="104"/>
    </location>
</feature>
<feature type="compositionally biased region" description="Low complexity" evidence="1">
    <location>
        <begin position="111"/>
        <end position="154"/>
    </location>
</feature>
<feature type="compositionally biased region" description="Polar residues" evidence="1">
    <location>
        <begin position="215"/>
        <end position="235"/>
    </location>
</feature>
<feature type="compositionally biased region" description="Low complexity" evidence="1">
    <location>
        <begin position="236"/>
        <end position="253"/>
    </location>
</feature>
<evidence type="ECO:0000256" key="1">
    <source>
        <dbReference type="SAM" id="MobiDB-lite"/>
    </source>
</evidence>
<name>Y6100_DICDI</name>
<reference key="1">
    <citation type="journal article" date="2005" name="Nature">
        <title>The genome of the social amoeba Dictyostelium discoideum.</title>
        <authorList>
            <person name="Eichinger L."/>
            <person name="Pachebat J.A."/>
            <person name="Gloeckner G."/>
            <person name="Rajandream M.A."/>
            <person name="Sucgang R."/>
            <person name="Berriman M."/>
            <person name="Song J."/>
            <person name="Olsen R."/>
            <person name="Szafranski K."/>
            <person name="Xu Q."/>
            <person name="Tunggal B."/>
            <person name="Kummerfeld S."/>
            <person name="Madera M."/>
            <person name="Konfortov B.A."/>
            <person name="Rivero F."/>
            <person name="Bankier A.T."/>
            <person name="Lehmann R."/>
            <person name="Hamlin N."/>
            <person name="Davies R."/>
            <person name="Gaudet P."/>
            <person name="Fey P."/>
            <person name="Pilcher K."/>
            <person name="Chen G."/>
            <person name="Saunders D."/>
            <person name="Sodergren E.J."/>
            <person name="Davis P."/>
            <person name="Kerhornou A."/>
            <person name="Nie X."/>
            <person name="Hall N."/>
            <person name="Anjard C."/>
            <person name="Hemphill L."/>
            <person name="Bason N."/>
            <person name="Farbrother P."/>
            <person name="Desany B."/>
            <person name="Just E."/>
            <person name="Morio T."/>
            <person name="Rost R."/>
            <person name="Churcher C.M."/>
            <person name="Cooper J."/>
            <person name="Haydock S."/>
            <person name="van Driessche N."/>
            <person name="Cronin A."/>
            <person name="Goodhead I."/>
            <person name="Muzny D.M."/>
            <person name="Mourier T."/>
            <person name="Pain A."/>
            <person name="Lu M."/>
            <person name="Harper D."/>
            <person name="Lindsay R."/>
            <person name="Hauser H."/>
            <person name="James K.D."/>
            <person name="Quiles M."/>
            <person name="Madan Babu M."/>
            <person name="Saito T."/>
            <person name="Buchrieser C."/>
            <person name="Wardroper A."/>
            <person name="Felder M."/>
            <person name="Thangavelu M."/>
            <person name="Johnson D."/>
            <person name="Knights A."/>
            <person name="Loulseged H."/>
            <person name="Mungall K.L."/>
            <person name="Oliver K."/>
            <person name="Price C."/>
            <person name="Quail M.A."/>
            <person name="Urushihara H."/>
            <person name="Hernandez J."/>
            <person name="Rabbinowitsch E."/>
            <person name="Steffen D."/>
            <person name="Sanders M."/>
            <person name="Ma J."/>
            <person name="Kohara Y."/>
            <person name="Sharp S."/>
            <person name="Simmonds M.N."/>
            <person name="Spiegler S."/>
            <person name="Tivey A."/>
            <person name="Sugano S."/>
            <person name="White B."/>
            <person name="Walker D."/>
            <person name="Woodward J.R."/>
            <person name="Winckler T."/>
            <person name="Tanaka Y."/>
            <person name="Shaulsky G."/>
            <person name="Schleicher M."/>
            <person name="Weinstock G.M."/>
            <person name="Rosenthal A."/>
            <person name="Cox E.C."/>
            <person name="Chisholm R.L."/>
            <person name="Gibbs R.A."/>
            <person name="Loomis W.F."/>
            <person name="Platzer M."/>
            <person name="Kay R.R."/>
            <person name="Williams J.G."/>
            <person name="Dear P.H."/>
            <person name="Noegel A.A."/>
            <person name="Barrell B.G."/>
            <person name="Kuspa A."/>
        </authorList>
    </citation>
    <scope>NUCLEOTIDE SEQUENCE [LARGE SCALE GENOMIC DNA]</scope>
    <source>
        <strain>AX4</strain>
    </source>
</reference>
<dbReference type="EMBL" id="AAFI02000070">
    <property type="protein sequence ID" value="EAL65079.1"/>
    <property type="molecule type" value="Genomic_DNA"/>
</dbReference>
<dbReference type="RefSeq" id="XP_638434.1">
    <property type="nucleotide sequence ID" value="XM_633342.1"/>
</dbReference>
<dbReference type="FunCoup" id="Q54PE1">
    <property type="interactions" value="877"/>
</dbReference>
<dbReference type="STRING" id="44689.Q54PE1"/>
<dbReference type="PaxDb" id="44689-DDB0186100"/>
<dbReference type="EnsemblProtists" id="EAL65079">
    <property type="protein sequence ID" value="EAL65079"/>
    <property type="gene ID" value="DDB_G0284619"/>
</dbReference>
<dbReference type="GeneID" id="8624684"/>
<dbReference type="KEGG" id="ddi:DDB_G0284619"/>
<dbReference type="dictyBase" id="DDB_G0284619"/>
<dbReference type="VEuPathDB" id="AmoebaDB:DDB_G0284619"/>
<dbReference type="eggNOG" id="ENOG502RHVD">
    <property type="taxonomic scope" value="Eukaryota"/>
</dbReference>
<dbReference type="HOGENOM" id="CLU_1100184_0_0_1"/>
<dbReference type="InParanoid" id="Q54PE1"/>
<dbReference type="OMA" id="ENDDMKH"/>
<dbReference type="PRO" id="PR:Q54PE1"/>
<dbReference type="Proteomes" id="UP000002195">
    <property type="component" value="Chromosome 4"/>
</dbReference>
<dbReference type="GO" id="GO:0030587">
    <property type="term" value="P:sorocarp development"/>
    <property type="evidence" value="ECO:0007001"/>
    <property type="project" value="dictyBase"/>
</dbReference>
<protein>
    <recommendedName>
        <fullName>Putative uncharacterized protein DDB_G0284619</fullName>
    </recommendedName>
</protein>
<keyword id="KW-1185">Reference proteome</keyword>
<proteinExistence type="predicted"/>
<organism>
    <name type="scientific">Dictyostelium discoideum</name>
    <name type="common">Social amoeba</name>
    <dbReference type="NCBI Taxonomy" id="44689"/>
    <lineage>
        <taxon>Eukaryota</taxon>
        <taxon>Amoebozoa</taxon>
        <taxon>Evosea</taxon>
        <taxon>Eumycetozoa</taxon>
        <taxon>Dictyostelia</taxon>
        <taxon>Dictyosteliales</taxon>
        <taxon>Dictyosteliaceae</taxon>
        <taxon>Dictyostelium</taxon>
    </lineage>
</organism>
<sequence length="253" mass="26900">MKVPILSRLRSLSSIDRNNEEKNVDMEHQVSLDFASAPNSPTVNKSDKNNKHDKHDKSGEKAPSTPKITTTSPPSPSSSSSPSPSSSTTTSPTTTTTTLSGSDSVSKKSGKTLSPTTPTLKSTLSTSSMKSTPSGSVKNTPRQTPRQTPRQTPRGSMTPREGGSDQFESGSLSPIGETYLEGEGYEESPKSSSFFSKFISNTFSGFSMDAAPETVVTSTPRQQSRPPSAQNTPNFTSQGGSRSTSRRQSAIQL</sequence>
<gene>
    <name type="ORF">DDB_G0284619</name>
</gene>
<accession>Q54PE1</accession>